<name>PPK16_SCHPO</name>
<sequence>MKKNEKANISASYNDLIATICNPRISDVGTYRIESVVGEGSFGKVYLAAHLLTNTKVVLKSSCRKQAIILAREIHHHRRLLHPNITRLYEVVCTEDRIYLAMEYCPNGELYDWVAREKRLDEKTTCRIMWQLCCAIQYLHRQGCVHRDLKLENIFLDKAYNVKLGDFGFSRDSDCSRRTFMNTRCGTVAYCAPELVQGHKYIGECVDIWSLGIIMYALLIGRLPFDEDDVSLTEQKIINECPQYPETLSKNSSSLLKSLLCKDYRLRPSIDQIISHPYFKENGYHSSSIRDPRPSSKAEEKVRKRLEFVGVDMDQLNASISQQRCDMFYGWWLLLLEKEMRKENKKKKGLFHLHKGSSSAVHIAPATPSLKTAQVSVMSNNQDSLKSRHTSSDSSNSLLSTFRSWLFDPKQKHTADTLSSSAIRPRTPSPSAENYLTQENFDSDNLSESLDNSVENLTVFPSINSFGRRHSNLPQTTHVDTGEQNTPFTPPLLKTVNLDGNKDFTFPSNSQNSPSKSSNLSINIDIPPSPLQNTVISPQPTRRSRTPIRSLSGRSSVASSRNSSRTRSYSNVSSASSNSLISIISSKPSSSTVQRQTPFHSPFERLHKSFHFPSGEPFNTRINATAIFTVGSGRKNPQSSSSLMFNQSSVKEEEEPEETSFSDSSKHFTDLL</sequence>
<protein>
    <recommendedName>
        <fullName>Serine/threonine-protein kinase ppk16</fullName>
        <ecNumber>2.7.11.1</ecNumber>
    </recommendedName>
    <alternativeName>
        <fullName>Meiotically up-regulated gene 92 protein</fullName>
    </alternativeName>
</protein>
<organism>
    <name type="scientific">Schizosaccharomyces pombe (strain 972 / ATCC 24843)</name>
    <name type="common">Fission yeast</name>
    <dbReference type="NCBI Taxonomy" id="284812"/>
    <lineage>
        <taxon>Eukaryota</taxon>
        <taxon>Fungi</taxon>
        <taxon>Dikarya</taxon>
        <taxon>Ascomycota</taxon>
        <taxon>Taphrinomycotina</taxon>
        <taxon>Schizosaccharomycetes</taxon>
        <taxon>Schizosaccharomycetales</taxon>
        <taxon>Schizosaccharomycetaceae</taxon>
        <taxon>Schizosaccharomyces</taxon>
    </lineage>
</organism>
<accession>Q9URY1</accession>
<proteinExistence type="evidence at protein level"/>
<feature type="chain" id="PRO_0000256818" description="Serine/threonine-protein kinase ppk16">
    <location>
        <begin position="1"/>
        <end position="672"/>
    </location>
</feature>
<feature type="domain" description="Protein kinase" evidence="1">
    <location>
        <begin position="31"/>
        <end position="279"/>
    </location>
</feature>
<feature type="region of interest" description="Disordered" evidence="3">
    <location>
        <begin position="375"/>
        <end position="396"/>
    </location>
</feature>
<feature type="region of interest" description="Disordered" evidence="3">
    <location>
        <begin position="416"/>
        <end position="436"/>
    </location>
</feature>
<feature type="region of interest" description="Disordered" evidence="3">
    <location>
        <begin position="464"/>
        <end position="572"/>
    </location>
</feature>
<feature type="region of interest" description="Disordered" evidence="3">
    <location>
        <begin position="632"/>
        <end position="672"/>
    </location>
</feature>
<feature type="compositionally biased region" description="Polar residues" evidence="3">
    <location>
        <begin position="375"/>
        <end position="384"/>
    </location>
</feature>
<feature type="compositionally biased region" description="Polar residues" evidence="3">
    <location>
        <begin position="472"/>
        <end position="487"/>
    </location>
</feature>
<feature type="compositionally biased region" description="Low complexity" evidence="3">
    <location>
        <begin position="508"/>
        <end position="523"/>
    </location>
</feature>
<feature type="compositionally biased region" description="Polar residues" evidence="3">
    <location>
        <begin position="531"/>
        <end position="541"/>
    </location>
</feature>
<feature type="compositionally biased region" description="Low complexity" evidence="3">
    <location>
        <begin position="549"/>
        <end position="572"/>
    </location>
</feature>
<feature type="compositionally biased region" description="Low complexity" evidence="3">
    <location>
        <begin position="639"/>
        <end position="649"/>
    </location>
</feature>
<feature type="active site" description="Proton acceptor" evidence="1 2">
    <location>
        <position position="148"/>
    </location>
</feature>
<feature type="binding site" evidence="1">
    <location>
        <begin position="37"/>
        <end position="45"/>
    </location>
    <ligand>
        <name>ATP</name>
        <dbReference type="ChEBI" id="CHEBI:30616"/>
    </ligand>
</feature>
<feature type="binding site" evidence="1">
    <location>
        <position position="60"/>
    </location>
    <ligand>
        <name>ATP</name>
        <dbReference type="ChEBI" id="CHEBI:30616"/>
    </ligand>
</feature>
<feature type="modified residue" description="Phosphoserine" evidence="6">
    <location>
        <position position="231"/>
    </location>
</feature>
<comment type="function">
    <text evidence="4">Has a role in meiosis.</text>
</comment>
<comment type="catalytic activity">
    <reaction>
        <text>L-seryl-[protein] + ATP = O-phospho-L-seryl-[protein] + ADP + H(+)</text>
        <dbReference type="Rhea" id="RHEA:17989"/>
        <dbReference type="Rhea" id="RHEA-COMP:9863"/>
        <dbReference type="Rhea" id="RHEA-COMP:11604"/>
        <dbReference type="ChEBI" id="CHEBI:15378"/>
        <dbReference type="ChEBI" id="CHEBI:29999"/>
        <dbReference type="ChEBI" id="CHEBI:30616"/>
        <dbReference type="ChEBI" id="CHEBI:83421"/>
        <dbReference type="ChEBI" id="CHEBI:456216"/>
        <dbReference type="EC" id="2.7.11.1"/>
    </reaction>
</comment>
<comment type="catalytic activity">
    <reaction>
        <text>L-threonyl-[protein] + ATP = O-phospho-L-threonyl-[protein] + ADP + H(+)</text>
        <dbReference type="Rhea" id="RHEA:46608"/>
        <dbReference type="Rhea" id="RHEA-COMP:11060"/>
        <dbReference type="Rhea" id="RHEA-COMP:11605"/>
        <dbReference type="ChEBI" id="CHEBI:15378"/>
        <dbReference type="ChEBI" id="CHEBI:30013"/>
        <dbReference type="ChEBI" id="CHEBI:30616"/>
        <dbReference type="ChEBI" id="CHEBI:61977"/>
        <dbReference type="ChEBI" id="CHEBI:456216"/>
        <dbReference type="EC" id="2.7.11.1"/>
    </reaction>
</comment>
<comment type="subcellular location">
    <subcellularLocation>
        <location evidence="5">Cytoplasm</location>
    </subcellularLocation>
    <text>Located at the cell tips and the septum.</text>
</comment>
<comment type="similarity">
    <text evidence="1">Belongs to the protein kinase superfamily. Ser/Thr protein kinase family.</text>
</comment>
<dbReference type="EC" id="2.7.11.1"/>
<dbReference type="EMBL" id="CU329670">
    <property type="protein sequence ID" value="CAB63494.1"/>
    <property type="molecule type" value="Genomic_DNA"/>
</dbReference>
<dbReference type="PIR" id="T50259">
    <property type="entry name" value="T50259"/>
</dbReference>
<dbReference type="RefSeq" id="NP_594821.1">
    <property type="nucleotide sequence ID" value="NM_001020250.2"/>
</dbReference>
<dbReference type="SMR" id="Q9URY1"/>
<dbReference type="BioGRID" id="279983">
    <property type="interactions" value="151"/>
</dbReference>
<dbReference type="FunCoup" id="Q9URY1">
    <property type="interactions" value="161"/>
</dbReference>
<dbReference type="STRING" id="284812.Q9URY1"/>
<dbReference type="iPTMnet" id="Q9URY1"/>
<dbReference type="PaxDb" id="4896-SPAC890.03.1"/>
<dbReference type="EnsemblFungi" id="SPAC890.03.1">
    <property type="protein sequence ID" value="SPAC890.03.1:pep"/>
    <property type="gene ID" value="SPAC890.03"/>
</dbReference>
<dbReference type="GeneID" id="2543567"/>
<dbReference type="KEGG" id="spo:2543567"/>
<dbReference type="PomBase" id="SPAC890.03">
    <property type="gene designation" value="ppk16"/>
</dbReference>
<dbReference type="VEuPathDB" id="FungiDB:SPAC890.03"/>
<dbReference type="eggNOG" id="KOG0583">
    <property type="taxonomic scope" value="Eukaryota"/>
</dbReference>
<dbReference type="HOGENOM" id="CLU_430306_0_0_1"/>
<dbReference type="InParanoid" id="Q9URY1"/>
<dbReference type="OMA" id="WQLCCAI"/>
<dbReference type="PRO" id="PR:Q9URY1"/>
<dbReference type="Proteomes" id="UP000002485">
    <property type="component" value="Chromosome I"/>
</dbReference>
<dbReference type="GO" id="GO:0032153">
    <property type="term" value="C:cell division site"/>
    <property type="evidence" value="ECO:0007005"/>
    <property type="project" value="PomBase"/>
</dbReference>
<dbReference type="GO" id="GO:0051286">
    <property type="term" value="C:cell tip"/>
    <property type="evidence" value="ECO:0007005"/>
    <property type="project" value="PomBase"/>
</dbReference>
<dbReference type="GO" id="GO:0005737">
    <property type="term" value="C:cytoplasm"/>
    <property type="evidence" value="ECO:0007005"/>
    <property type="project" value="PomBase"/>
</dbReference>
<dbReference type="GO" id="GO:0005829">
    <property type="term" value="C:cytosol"/>
    <property type="evidence" value="ECO:0007005"/>
    <property type="project" value="PomBase"/>
</dbReference>
<dbReference type="GO" id="GO:0005524">
    <property type="term" value="F:ATP binding"/>
    <property type="evidence" value="ECO:0007669"/>
    <property type="project" value="UniProtKB-KW"/>
</dbReference>
<dbReference type="GO" id="GO:0106310">
    <property type="term" value="F:protein serine kinase activity"/>
    <property type="evidence" value="ECO:0007669"/>
    <property type="project" value="RHEA"/>
</dbReference>
<dbReference type="GO" id="GO:0004674">
    <property type="term" value="F:protein serine/threonine kinase activity"/>
    <property type="evidence" value="ECO:0000318"/>
    <property type="project" value="GO_Central"/>
</dbReference>
<dbReference type="GO" id="GO:0051321">
    <property type="term" value="P:meiotic cell cycle"/>
    <property type="evidence" value="ECO:0007669"/>
    <property type="project" value="UniProtKB-KW"/>
</dbReference>
<dbReference type="GO" id="GO:0032878">
    <property type="term" value="P:regulation of establishment or maintenance of cell polarity"/>
    <property type="evidence" value="ECO:0000315"/>
    <property type="project" value="PomBase"/>
</dbReference>
<dbReference type="GO" id="GO:0023052">
    <property type="term" value="P:signaling"/>
    <property type="evidence" value="ECO:0000303"/>
    <property type="project" value="PomBase"/>
</dbReference>
<dbReference type="CDD" id="cd14003">
    <property type="entry name" value="STKc_AMPK-like"/>
    <property type="match status" value="1"/>
</dbReference>
<dbReference type="FunFam" id="1.10.510.10:FF:000650">
    <property type="entry name" value="Serine/threonine-protein kinase ppk16"/>
    <property type="match status" value="1"/>
</dbReference>
<dbReference type="Gene3D" id="1.10.510.10">
    <property type="entry name" value="Transferase(Phosphotransferase) domain 1"/>
    <property type="match status" value="1"/>
</dbReference>
<dbReference type="InterPro" id="IPR030616">
    <property type="entry name" value="Aur-like"/>
</dbReference>
<dbReference type="InterPro" id="IPR011009">
    <property type="entry name" value="Kinase-like_dom_sf"/>
</dbReference>
<dbReference type="InterPro" id="IPR000719">
    <property type="entry name" value="Prot_kinase_dom"/>
</dbReference>
<dbReference type="InterPro" id="IPR017441">
    <property type="entry name" value="Protein_kinase_ATP_BS"/>
</dbReference>
<dbReference type="InterPro" id="IPR008271">
    <property type="entry name" value="Ser/Thr_kinase_AS"/>
</dbReference>
<dbReference type="PANTHER" id="PTHR24350">
    <property type="entry name" value="SERINE/THREONINE-PROTEIN KINASE IAL-RELATED"/>
    <property type="match status" value="1"/>
</dbReference>
<dbReference type="Pfam" id="PF00069">
    <property type="entry name" value="Pkinase"/>
    <property type="match status" value="1"/>
</dbReference>
<dbReference type="SMART" id="SM00220">
    <property type="entry name" value="S_TKc"/>
    <property type="match status" value="1"/>
</dbReference>
<dbReference type="SUPFAM" id="SSF56112">
    <property type="entry name" value="Protein kinase-like (PK-like)"/>
    <property type="match status" value="1"/>
</dbReference>
<dbReference type="PROSITE" id="PS00107">
    <property type="entry name" value="PROTEIN_KINASE_ATP"/>
    <property type="match status" value="1"/>
</dbReference>
<dbReference type="PROSITE" id="PS50011">
    <property type="entry name" value="PROTEIN_KINASE_DOM"/>
    <property type="match status" value="1"/>
</dbReference>
<dbReference type="PROSITE" id="PS00108">
    <property type="entry name" value="PROTEIN_KINASE_ST"/>
    <property type="match status" value="1"/>
</dbReference>
<gene>
    <name type="primary">ppk16</name>
    <name type="synonym">mug92</name>
    <name type="ORF">SPAC890.03</name>
</gene>
<keyword id="KW-0067">ATP-binding</keyword>
<keyword id="KW-0963">Cytoplasm</keyword>
<keyword id="KW-0418">Kinase</keyword>
<keyword id="KW-0469">Meiosis</keyword>
<keyword id="KW-0547">Nucleotide-binding</keyword>
<keyword id="KW-0597">Phosphoprotein</keyword>
<keyword id="KW-1185">Reference proteome</keyword>
<keyword id="KW-0723">Serine/threonine-protein kinase</keyword>
<keyword id="KW-0808">Transferase</keyword>
<reference key="1">
    <citation type="journal article" date="2002" name="Nature">
        <title>The genome sequence of Schizosaccharomyces pombe.</title>
        <authorList>
            <person name="Wood V."/>
            <person name="Gwilliam R."/>
            <person name="Rajandream M.A."/>
            <person name="Lyne M.H."/>
            <person name="Lyne R."/>
            <person name="Stewart A."/>
            <person name="Sgouros J.G."/>
            <person name="Peat N."/>
            <person name="Hayles J."/>
            <person name="Baker S.G."/>
            <person name="Basham D."/>
            <person name="Bowman S."/>
            <person name="Brooks K."/>
            <person name="Brown D."/>
            <person name="Brown S."/>
            <person name="Chillingworth T."/>
            <person name="Churcher C.M."/>
            <person name="Collins M."/>
            <person name="Connor R."/>
            <person name="Cronin A."/>
            <person name="Davis P."/>
            <person name="Feltwell T."/>
            <person name="Fraser A."/>
            <person name="Gentles S."/>
            <person name="Goble A."/>
            <person name="Hamlin N."/>
            <person name="Harris D.E."/>
            <person name="Hidalgo J."/>
            <person name="Hodgson G."/>
            <person name="Holroyd S."/>
            <person name="Hornsby T."/>
            <person name="Howarth S."/>
            <person name="Huckle E.J."/>
            <person name="Hunt S."/>
            <person name="Jagels K."/>
            <person name="James K.D."/>
            <person name="Jones L."/>
            <person name="Jones M."/>
            <person name="Leather S."/>
            <person name="McDonald S."/>
            <person name="McLean J."/>
            <person name="Mooney P."/>
            <person name="Moule S."/>
            <person name="Mungall K.L."/>
            <person name="Murphy L.D."/>
            <person name="Niblett D."/>
            <person name="Odell C."/>
            <person name="Oliver K."/>
            <person name="O'Neil S."/>
            <person name="Pearson D."/>
            <person name="Quail M.A."/>
            <person name="Rabbinowitsch E."/>
            <person name="Rutherford K.M."/>
            <person name="Rutter S."/>
            <person name="Saunders D."/>
            <person name="Seeger K."/>
            <person name="Sharp S."/>
            <person name="Skelton J."/>
            <person name="Simmonds M.N."/>
            <person name="Squares R."/>
            <person name="Squares S."/>
            <person name="Stevens K."/>
            <person name="Taylor K."/>
            <person name="Taylor R.G."/>
            <person name="Tivey A."/>
            <person name="Walsh S.V."/>
            <person name="Warren T."/>
            <person name="Whitehead S."/>
            <person name="Woodward J.R."/>
            <person name="Volckaert G."/>
            <person name="Aert R."/>
            <person name="Robben J."/>
            <person name="Grymonprez B."/>
            <person name="Weltjens I."/>
            <person name="Vanstreels E."/>
            <person name="Rieger M."/>
            <person name="Schaefer M."/>
            <person name="Mueller-Auer S."/>
            <person name="Gabel C."/>
            <person name="Fuchs M."/>
            <person name="Duesterhoeft A."/>
            <person name="Fritzc C."/>
            <person name="Holzer E."/>
            <person name="Moestl D."/>
            <person name="Hilbert H."/>
            <person name="Borzym K."/>
            <person name="Langer I."/>
            <person name="Beck A."/>
            <person name="Lehrach H."/>
            <person name="Reinhardt R."/>
            <person name="Pohl T.M."/>
            <person name="Eger P."/>
            <person name="Zimmermann W."/>
            <person name="Wedler H."/>
            <person name="Wambutt R."/>
            <person name="Purnelle B."/>
            <person name="Goffeau A."/>
            <person name="Cadieu E."/>
            <person name="Dreano S."/>
            <person name="Gloux S."/>
            <person name="Lelaure V."/>
            <person name="Mottier S."/>
            <person name="Galibert F."/>
            <person name="Aves S.J."/>
            <person name="Xiang Z."/>
            <person name="Hunt C."/>
            <person name="Moore K."/>
            <person name="Hurst S.M."/>
            <person name="Lucas M."/>
            <person name="Rochet M."/>
            <person name="Gaillardin C."/>
            <person name="Tallada V.A."/>
            <person name="Garzon A."/>
            <person name="Thode G."/>
            <person name="Daga R.R."/>
            <person name="Cruzado L."/>
            <person name="Jimenez J."/>
            <person name="Sanchez M."/>
            <person name="del Rey F."/>
            <person name="Benito J."/>
            <person name="Dominguez A."/>
            <person name="Revuelta J.L."/>
            <person name="Moreno S."/>
            <person name="Armstrong J."/>
            <person name="Forsburg S.L."/>
            <person name="Cerutti L."/>
            <person name="Lowe T."/>
            <person name="McCombie W.R."/>
            <person name="Paulsen I."/>
            <person name="Potashkin J."/>
            <person name="Shpakovski G.V."/>
            <person name="Ussery D."/>
            <person name="Barrell B.G."/>
            <person name="Nurse P."/>
        </authorList>
    </citation>
    <scope>NUCLEOTIDE SEQUENCE [LARGE SCALE GENOMIC DNA]</scope>
    <source>
        <strain>972 / ATCC 24843</strain>
    </source>
</reference>
<reference key="2">
    <citation type="journal article" date="2005" name="Curr. Biol.">
        <title>A large-scale screen in S. pombe identifies seven novel genes required for critical meiotic events.</title>
        <authorList>
            <person name="Martin-Castellanos C."/>
            <person name="Blanco M."/>
            <person name="Rozalen A.E."/>
            <person name="Perez-Hidalgo L."/>
            <person name="Garcia A.I."/>
            <person name="Conde F."/>
            <person name="Mata J."/>
            <person name="Ellermeier C."/>
            <person name="Davis L."/>
            <person name="San-Segundo P."/>
            <person name="Smith G.R."/>
            <person name="Moreno S."/>
        </authorList>
    </citation>
    <scope>FUNCTION IN MEIOSIS</scope>
</reference>
<reference key="3">
    <citation type="journal article" date="2005" name="Eukaryot. Cell">
        <title>Systematic deletion analysis of fission yeast protein kinases.</title>
        <authorList>
            <person name="Bimbo A."/>
            <person name="Jia Y."/>
            <person name="Poh S.L."/>
            <person name="Karuturi R.K.M."/>
            <person name="den Elzen N."/>
            <person name="Peng X."/>
            <person name="Zheng L."/>
            <person name="O'Connell M."/>
            <person name="Liu E.T."/>
            <person name="Balasubramanian M.K."/>
            <person name="Liu J."/>
        </authorList>
    </citation>
    <scope>IDENTIFICATION</scope>
</reference>
<reference key="4">
    <citation type="journal article" date="2006" name="Nat. Biotechnol.">
        <title>ORFeome cloning and global analysis of protein localization in the fission yeast Schizosaccharomyces pombe.</title>
        <authorList>
            <person name="Matsuyama A."/>
            <person name="Arai R."/>
            <person name="Yashiroda Y."/>
            <person name="Shirai A."/>
            <person name="Kamata A."/>
            <person name="Sekido S."/>
            <person name="Kobayashi Y."/>
            <person name="Hashimoto A."/>
            <person name="Hamamoto M."/>
            <person name="Hiraoka Y."/>
            <person name="Horinouchi S."/>
            <person name="Yoshida M."/>
        </authorList>
    </citation>
    <scope>SUBCELLULAR LOCATION [LARGE SCALE ANALYSIS]</scope>
</reference>
<reference key="5">
    <citation type="journal article" date="2008" name="J. Proteome Res.">
        <title>Phosphoproteome analysis of fission yeast.</title>
        <authorList>
            <person name="Wilson-Grady J.T."/>
            <person name="Villen J."/>
            <person name="Gygi S.P."/>
        </authorList>
    </citation>
    <scope>PHOSPHORYLATION [LARGE SCALE ANALYSIS] AT SER-231</scope>
    <scope>IDENTIFICATION BY MASS SPECTROMETRY</scope>
</reference>
<evidence type="ECO:0000255" key="1">
    <source>
        <dbReference type="PROSITE-ProRule" id="PRU00159"/>
    </source>
</evidence>
<evidence type="ECO:0000255" key="2">
    <source>
        <dbReference type="PROSITE-ProRule" id="PRU10027"/>
    </source>
</evidence>
<evidence type="ECO:0000256" key="3">
    <source>
        <dbReference type="SAM" id="MobiDB-lite"/>
    </source>
</evidence>
<evidence type="ECO:0000269" key="4">
    <source>
    </source>
</evidence>
<evidence type="ECO:0000269" key="5">
    <source>
    </source>
</evidence>
<evidence type="ECO:0000269" key="6">
    <source>
    </source>
</evidence>